<protein>
    <recommendedName>
        <fullName evidence="1">ATP phosphoribosyltransferase</fullName>
        <shortName evidence="1">ATP-PRT</shortName>
        <shortName evidence="1">ATP-PRTase</shortName>
        <ecNumber evidence="1">2.4.2.17</ecNumber>
    </recommendedName>
</protein>
<accession>B1LP22</accession>
<dbReference type="EC" id="2.4.2.17" evidence="1"/>
<dbReference type="EMBL" id="CP000970">
    <property type="protein sequence ID" value="ACB18569.1"/>
    <property type="molecule type" value="Genomic_DNA"/>
</dbReference>
<dbReference type="RefSeq" id="WP_000131782.1">
    <property type="nucleotide sequence ID" value="NC_010498.1"/>
</dbReference>
<dbReference type="SMR" id="B1LP22"/>
<dbReference type="GeneID" id="93775154"/>
<dbReference type="KEGG" id="ecm:EcSMS35_1041"/>
<dbReference type="HOGENOM" id="CLU_038115_1_0_6"/>
<dbReference type="UniPathway" id="UPA00031">
    <property type="reaction ID" value="UER00006"/>
</dbReference>
<dbReference type="Proteomes" id="UP000007011">
    <property type="component" value="Chromosome"/>
</dbReference>
<dbReference type="GO" id="GO:0005737">
    <property type="term" value="C:cytoplasm"/>
    <property type="evidence" value="ECO:0007669"/>
    <property type="project" value="UniProtKB-SubCell"/>
</dbReference>
<dbReference type="GO" id="GO:0005524">
    <property type="term" value="F:ATP binding"/>
    <property type="evidence" value="ECO:0007669"/>
    <property type="project" value="UniProtKB-KW"/>
</dbReference>
<dbReference type="GO" id="GO:0003879">
    <property type="term" value="F:ATP phosphoribosyltransferase activity"/>
    <property type="evidence" value="ECO:0007669"/>
    <property type="project" value="UniProtKB-UniRule"/>
</dbReference>
<dbReference type="GO" id="GO:0000287">
    <property type="term" value="F:magnesium ion binding"/>
    <property type="evidence" value="ECO:0007669"/>
    <property type="project" value="UniProtKB-UniRule"/>
</dbReference>
<dbReference type="GO" id="GO:0000105">
    <property type="term" value="P:L-histidine biosynthetic process"/>
    <property type="evidence" value="ECO:0007669"/>
    <property type="project" value="UniProtKB-UniRule"/>
</dbReference>
<dbReference type="CDD" id="cd13592">
    <property type="entry name" value="PBP2_HisGL2"/>
    <property type="match status" value="1"/>
</dbReference>
<dbReference type="FunFam" id="3.30.70.120:FF:000002">
    <property type="entry name" value="ATP phosphoribosyltransferase"/>
    <property type="match status" value="1"/>
</dbReference>
<dbReference type="FunFam" id="3.40.190.10:FF:000008">
    <property type="entry name" value="ATP phosphoribosyltransferase"/>
    <property type="match status" value="1"/>
</dbReference>
<dbReference type="Gene3D" id="3.30.70.120">
    <property type="match status" value="1"/>
</dbReference>
<dbReference type="Gene3D" id="3.40.190.10">
    <property type="entry name" value="Periplasmic binding protein-like II"/>
    <property type="match status" value="2"/>
</dbReference>
<dbReference type="HAMAP" id="MF_00079">
    <property type="entry name" value="HisG_Long"/>
    <property type="match status" value="1"/>
</dbReference>
<dbReference type="InterPro" id="IPR020621">
    <property type="entry name" value="ATP-PRT_HisG_long"/>
</dbReference>
<dbReference type="InterPro" id="IPR013820">
    <property type="entry name" value="ATP_PRibTrfase_cat"/>
</dbReference>
<dbReference type="InterPro" id="IPR018198">
    <property type="entry name" value="ATP_PRibTrfase_CS"/>
</dbReference>
<dbReference type="InterPro" id="IPR001348">
    <property type="entry name" value="ATP_PRibTrfase_HisG"/>
</dbReference>
<dbReference type="InterPro" id="IPR013115">
    <property type="entry name" value="HisG_C"/>
</dbReference>
<dbReference type="InterPro" id="IPR011322">
    <property type="entry name" value="N-reg_PII-like_a/b"/>
</dbReference>
<dbReference type="InterPro" id="IPR015867">
    <property type="entry name" value="N-reg_PII/ATP_PRibTrfase_C"/>
</dbReference>
<dbReference type="NCBIfam" id="TIGR00070">
    <property type="entry name" value="hisG"/>
    <property type="match status" value="1"/>
</dbReference>
<dbReference type="NCBIfam" id="TIGR03455">
    <property type="entry name" value="HisG_C-term"/>
    <property type="match status" value="1"/>
</dbReference>
<dbReference type="PANTHER" id="PTHR21403:SF8">
    <property type="entry name" value="ATP PHOSPHORIBOSYLTRANSFERASE"/>
    <property type="match status" value="1"/>
</dbReference>
<dbReference type="PANTHER" id="PTHR21403">
    <property type="entry name" value="ATP PHOSPHORIBOSYLTRANSFERASE ATP-PRTASE"/>
    <property type="match status" value="1"/>
</dbReference>
<dbReference type="Pfam" id="PF01634">
    <property type="entry name" value="HisG"/>
    <property type="match status" value="1"/>
</dbReference>
<dbReference type="Pfam" id="PF08029">
    <property type="entry name" value="HisG_C"/>
    <property type="match status" value="1"/>
</dbReference>
<dbReference type="SUPFAM" id="SSF54913">
    <property type="entry name" value="GlnB-like"/>
    <property type="match status" value="1"/>
</dbReference>
<dbReference type="SUPFAM" id="SSF53850">
    <property type="entry name" value="Periplasmic binding protein-like II"/>
    <property type="match status" value="1"/>
</dbReference>
<dbReference type="PROSITE" id="PS01316">
    <property type="entry name" value="ATP_P_PHORIBOSYLTR"/>
    <property type="match status" value="1"/>
</dbReference>
<keyword id="KW-0028">Amino-acid biosynthesis</keyword>
<keyword id="KW-0067">ATP-binding</keyword>
<keyword id="KW-0963">Cytoplasm</keyword>
<keyword id="KW-0328">Glycosyltransferase</keyword>
<keyword id="KW-0368">Histidine biosynthesis</keyword>
<keyword id="KW-0460">Magnesium</keyword>
<keyword id="KW-0479">Metal-binding</keyword>
<keyword id="KW-0547">Nucleotide-binding</keyword>
<keyword id="KW-0808">Transferase</keyword>
<comment type="function">
    <text evidence="1">Catalyzes the condensation of ATP and 5-phosphoribose 1-diphosphate to form N'-(5'-phosphoribosyl)-ATP (PR-ATP). Has a crucial role in the pathway because the rate of histidine biosynthesis seems to be controlled primarily by regulation of HisG enzymatic activity.</text>
</comment>
<comment type="catalytic activity">
    <reaction evidence="1">
        <text>1-(5-phospho-beta-D-ribosyl)-ATP + diphosphate = 5-phospho-alpha-D-ribose 1-diphosphate + ATP</text>
        <dbReference type="Rhea" id="RHEA:18473"/>
        <dbReference type="ChEBI" id="CHEBI:30616"/>
        <dbReference type="ChEBI" id="CHEBI:33019"/>
        <dbReference type="ChEBI" id="CHEBI:58017"/>
        <dbReference type="ChEBI" id="CHEBI:73183"/>
        <dbReference type="EC" id="2.4.2.17"/>
    </reaction>
</comment>
<comment type="cofactor">
    <cofactor evidence="1">
        <name>Mg(2+)</name>
        <dbReference type="ChEBI" id="CHEBI:18420"/>
    </cofactor>
</comment>
<comment type="activity regulation">
    <text evidence="1">Feedback inhibited by histidine.</text>
</comment>
<comment type="pathway">
    <text evidence="1">Amino-acid biosynthesis; L-histidine biosynthesis; L-histidine from 5-phospho-alpha-D-ribose 1-diphosphate: step 1/9.</text>
</comment>
<comment type="subunit">
    <text evidence="1">Equilibrium between an active dimeric form, an inactive hexameric form and higher aggregates. Interconversion between the various forms is largely reversible and is influenced by the natural substrates and inhibitors of the enzyme.</text>
</comment>
<comment type="subcellular location">
    <subcellularLocation>
        <location evidence="1">Cytoplasm</location>
    </subcellularLocation>
</comment>
<comment type="similarity">
    <text evidence="1">Belongs to the ATP phosphoribosyltransferase family. Long subfamily.</text>
</comment>
<evidence type="ECO:0000255" key="1">
    <source>
        <dbReference type="HAMAP-Rule" id="MF_00079"/>
    </source>
</evidence>
<name>HIS1_ECOSM</name>
<organism>
    <name type="scientific">Escherichia coli (strain SMS-3-5 / SECEC)</name>
    <dbReference type="NCBI Taxonomy" id="439855"/>
    <lineage>
        <taxon>Bacteria</taxon>
        <taxon>Pseudomonadati</taxon>
        <taxon>Pseudomonadota</taxon>
        <taxon>Gammaproteobacteria</taxon>
        <taxon>Enterobacterales</taxon>
        <taxon>Enterobacteriaceae</taxon>
        <taxon>Escherichia</taxon>
    </lineage>
</organism>
<proteinExistence type="inferred from homology"/>
<feature type="chain" id="PRO_1000117092" description="ATP phosphoribosyltransferase">
    <location>
        <begin position="1"/>
        <end position="299"/>
    </location>
</feature>
<sequence length="299" mass="33367">MTDNTRLRIAMQKSGRLSDDSRELLARCGIKINLHTQRLIAMAENMPIDILRVRDDDIPGLVMDGVVDLGIIGENVLEEELLNRRAQGEDPRYFTLRRLDFGGCRLSLATPVDEAWDGPLSLNGKRIATSYPHLLKRYLDQKGISFKSCLLNGSVEVAPRAGLADAICDLVSTGATLEANGLREVEVIYRSKACLIQRDGEMEESKQQLIDKLLTRIQGVIQARESKYIMMHAPTERLDEVIALLPGAERPTILPLAGDQQRVAMHMVSSETLFWETMEKLKALGASSILVLPIEKMME</sequence>
<gene>
    <name evidence="1" type="primary">hisG</name>
    <name type="ordered locus">EcSMS35_1041</name>
</gene>
<reference key="1">
    <citation type="journal article" date="2008" name="J. Bacteriol.">
        <title>Insights into the environmental resistance gene pool from the genome sequence of the multidrug-resistant environmental isolate Escherichia coli SMS-3-5.</title>
        <authorList>
            <person name="Fricke W.F."/>
            <person name="Wright M.S."/>
            <person name="Lindell A.H."/>
            <person name="Harkins D.M."/>
            <person name="Baker-Austin C."/>
            <person name="Ravel J."/>
            <person name="Stepanauskas R."/>
        </authorList>
    </citation>
    <scope>NUCLEOTIDE SEQUENCE [LARGE SCALE GENOMIC DNA]</scope>
    <source>
        <strain>SMS-3-5 / SECEC</strain>
    </source>
</reference>